<name>RL35_CYAP4</name>
<feature type="chain" id="PRO_1000194068" description="Large ribosomal subunit protein bL35">
    <location>
        <begin position="1"/>
        <end position="65"/>
    </location>
</feature>
<feature type="region of interest" description="Disordered" evidence="2">
    <location>
        <begin position="1"/>
        <end position="28"/>
    </location>
</feature>
<feature type="compositionally biased region" description="Basic residues" evidence="2">
    <location>
        <begin position="1"/>
        <end position="15"/>
    </location>
</feature>
<protein>
    <recommendedName>
        <fullName evidence="1">Large ribosomal subunit protein bL35</fullName>
    </recommendedName>
    <alternativeName>
        <fullName evidence="3">50S ribosomal protein L35</fullName>
    </alternativeName>
</protein>
<organism>
    <name type="scientific">Cyanothece sp. (strain PCC 7425 / ATCC 29141)</name>
    <dbReference type="NCBI Taxonomy" id="395961"/>
    <lineage>
        <taxon>Bacteria</taxon>
        <taxon>Bacillati</taxon>
        <taxon>Cyanobacteriota</taxon>
        <taxon>Cyanophyceae</taxon>
        <taxon>Gomontiellales</taxon>
        <taxon>Cyanothecaceae</taxon>
        <taxon>Cyanothece</taxon>
    </lineage>
</organism>
<sequence>MPKLKTRKAAAKRFRQTGTGKFTRRKANRNHLLEHKSTARKNKLSHMAIVDERDEERVSLMLPYL</sequence>
<gene>
    <name evidence="1" type="primary">rpmI</name>
    <name evidence="1" type="synonym">rpl35</name>
    <name type="ordered locus">Cyan7425_1477</name>
</gene>
<dbReference type="EMBL" id="CP001344">
    <property type="protein sequence ID" value="ACL43847.1"/>
    <property type="molecule type" value="Genomic_DNA"/>
</dbReference>
<dbReference type="SMR" id="B8HPI6"/>
<dbReference type="STRING" id="395961.Cyan7425_1477"/>
<dbReference type="KEGG" id="cyn:Cyan7425_1477"/>
<dbReference type="eggNOG" id="COG0291">
    <property type="taxonomic scope" value="Bacteria"/>
</dbReference>
<dbReference type="HOGENOM" id="CLU_169643_4_0_3"/>
<dbReference type="OrthoDB" id="47476at2"/>
<dbReference type="GO" id="GO:0022625">
    <property type="term" value="C:cytosolic large ribosomal subunit"/>
    <property type="evidence" value="ECO:0007669"/>
    <property type="project" value="TreeGrafter"/>
</dbReference>
<dbReference type="GO" id="GO:0003735">
    <property type="term" value="F:structural constituent of ribosome"/>
    <property type="evidence" value="ECO:0007669"/>
    <property type="project" value="InterPro"/>
</dbReference>
<dbReference type="GO" id="GO:0006412">
    <property type="term" value="P:translation"/>
    <property type="evidence" value="ECO:0007669"/>
    <property type="project" value="UniProtKB-UniRule"/>
</dbReference>
<dbReference type="FunFam" id="4.10.410.60:FF:000001">
    <property type="entry name" value="50S ribosomal protein L35"/>
    <property type="match status" value="1"/>
</dbReference>
<dbReference type="Gene3D" id="4.10.410.60">
    <property type="match status" value="1"/>
</dbReference>
<dbReference type="HAMAP" id="MF_00514">
    <property type="entry name" value="Ribosomal_bL35"/>
    <property type="match status" value="1"/>
</dbReference>
<dbReference type="InterPro" id="IPR001706">
    <property type="entry name" value="Ribosomal_bL35"/>
</dbReference>
<dbReference type="InterPro" id="IPR021137">
    <property type="entry name" value="Ribosomal_bL35-like"/>
</dbReference>
<dbReference type="InterPro" id="IPR018265">
    <property type="entry name" value="Ribosomal_bL35_CS"/>
</dbReference>
<dbReference type="InterPro" id="IPR037229">
    <property type="entry name" value="Ribosomal_bL35_sf"/>
</dbReference>
<dbReference type="NCBIfam" id="TIGR00001">
    <property type="entry name" value="rpmI_bact"/>
    <property type="match status" value="1"/>
</dbReference>
<dbReference type="PANTHER" id="PTHR33343">
    <property type="entry name" value="54S RIBOSOMAL PROTEIN BL35M"/>
    <property type="match status" value="1"/>
</dbReference>
<dbReference type="PANTHER" id="PTHR33343:SF1">
    <property type="entry name" value="LARGE RIBOSOMAL SUBUNIT PROTEIN BL35M"/>
    <property type="match status" value="1"/>
</dbReference>
<dbReference type="Pfam" id="PF01632">
    <property type="entry name" value="Ribosomal_L35p"/>
    <property type="match status" value="1"/>
</dbReference>
<dbReference type="PRINTS" id="PR00064">
    <property type="entry name" value="RIBOSOMALL35"/>
</dbReference>
<dbReference type="SUPFAM" id="SSF143034">
    <property type="entry name" value="L35p-like"/>
    <property type="match status" value="1"/>
</dbReference>
<dbReference type="PROSITE" id="PS00936">
    <property type="entry name" value="RIBOSOMAL_L35"/>
    <property type="match status" value="1"/>
</dbReference>
<accession>B8HPI6</accession>
<evidence type="ECO:0000255" key="1">
    <source>
        <dbReference type="HAMAP-Rule" id="MF_00514"/>
    </source>
</evidence>
<evidence type="ECO:0000256" key="2">
    <source>
        <dbReference type="SAM" id="MobiDB-lite"/>
    </source>
</evidence>
<evidence type="ECO:0000305" key="3"/>
<proteinExistence type="inferred from homology"/>
<reference key="1">
    <citation type="journal article" date="2011" name="MBio">
        <title>Novel metabolic attributes of the genus Cyanothece, comprising a group of unicellular nitrogen-fixing Cyanobacteria.</title>
        <authorList>
            <person name="Bandyopadhyay A."/>
            <person name="Elvitigala T."/>
            <person name="Welsh E."/>
            <person name="Stockel J."/>
            <person name="Liberton M."/>
            <person name="Min H."/>
            <person name="Sherman L.A."/>
            <person name="Pakrasi H.B."/>
        </authorList>
    </citation>
    <scope>NUCLEOTIDE SEQUENCE [LARGE SCALE GENOMIC DNA]</scope>
    <source>
        <strain>PCC 7425 / ATCC 29141</strain>
    </source>
</reference>
<comment type="similarity">
    <text evidence="1">Belongs to the bacterial ribosomal protein bL35 family.</text>
</comment>
<keyword id="KW-0687">Ribonucleoprotein</keyword>
<keyword id="KW-0689">Ribosomal protein</keyword>